<evidence type="ECO:0000255" key="1">
    <source>
        <dbReference type="HAMAP-Rule" id="MF_01333"/>
    </source>
</evidence>
<evidence type="ECO:0000305" key="2"/>
<name>RL5_SACEN</name>
<feature type="chain" id="PRO_1000052818" description="Large ribosomal subunit protein uL5">
    <location>
        <begin position="1"/>
        <end position="187"/>
    </location>
</feature>
<sequence>MTTTEKIVPRLKTRYRDEIRQALNEEFHYSNAMQVPGVVKVVVNMGVGDAARDSKLIEGAVRDLATITGQKPEIRKARKSIAQFKLREGMPIGARVTLRGDRMWEFIDRLVTIALPRIRDFRGLSGKQFDGKGNYTFGLNEQSMFHEIDPDSIDRPRGMDITVVTTANTDEEGRVLLRRLGFPFKEN</sequence>
<keyword id="KW-1185">Reference proteome</keyword>
<keyword id="KW-0687">Ribonucleoprotein</keyword>
<keyword id="KW-0689">Ribosomal protein</keyword>
<keyword id="KW-0694">RNA-binding</keyword>
<keyword id="KW-0699">rRNA-binding</keyword>
<keyword id="KW-0820">tRNA-binding</keyword>
<proteinExistence type="inferred from homology"/>
<comment type="function">
    <text evidence="1">This is one of the proteins that bind and probably mediate the attachment of the 5S RNA into the large ribosomal subunit, where it forms part of the central protuberance. In the 70S ribosome it contacts protein S13 of the 30S subunit (bridge B1b), connecting the 2 subunits; this bridge is implicated in subunit movement. Contacts the P site tRNA; the 5S rRNA and some of its associated proteins might help stabilize positioning of ribosome-bound tRNAs.</text>
</comment>
<comment type="subunit">
    <text evidence="1">Part of the 50S ribosomal subunit; part of the 5S rRNA/L5/L18/L25 subcomplex. Contacts the 5S rRNA and the P site tRNA. Forms a bridge to the 30S subunit in the 70S ribosome.</text>
</comment>
<comment type="similarity">
    <text evidence="1">Belongs to the universal ribosomal protein uL5 family.</text>
</comment>
<dbReference type="EMBL" id="AM420293">
    <property type="protein sequence ID" value="CAM05988.1"/>
    <property type="molecule type" value="Genomic_DNA"/>
</dbReference>
<dbReference type="RefSeq" id="WP_009948643.1">
    <property type="nucleotide sequence ID" value="NC_009142.1"/>
</dbReference>
<dbReference type="SMR" id="A4FPL3"/>
<dbReference type="STRING" id="405948.SACE_6824"/>
<dbReference type="KEGG" id="sen:SACE_6824"/>
<dbReference type="eggNOG" id="COG0094">
    <property type="taxonomic scope" value="Bacteria"/>
</dbReference>
<dbReference type="HOGENOM" id="CLU_061015_2_1_11"/>
<dbReference type="OrthoDB" id="9806626at2"/>
<dbReference type="Proteomes" id="UP000006728">
    <property type="component" value="Chromosome"/>
</dbReference>
<dbReference type="GO" id="GO:1990904">
    <property type="term" value="C:ribonucleoprotein complex"/>
    <property type="evidence" value="ECO:0007669"/>
    <property type="project" value="UniProtKB-KW"/>
</dbReference>
<dbReference type="GO" id="GO:0005840">
    <property type="term" value="C:ribosome"/>
    <property type="evidence" value="ECO:0007669"/>
    <property type="project" value="UniProtKB-KW"/>
</dbReference>
<dbReference type="GO" id="GO:0019843">
    <property type="term" value="F:rRNA binding"/>
    <property type="evidence" value="ECO:0007669"/>
    <property type="project" value="UniProtKB-UniRule"/>
</dbReference>
<dbReference type="GO" id="GO:0003735">
    <property type="term" value="F:structural constituent of ribosome"/>
    <property type="evidence" value="ECO:0007669"/>
    <property type="project" value="InterPro"/>
</dbReference>
<dbReference type="GO" id="GO:0000049">
    <property type="term" value="F:tRNA binding"/>
    <property type="evidence" value="ECO:0007669"/>
    <property type="project" value="UniProtKB-UniRule"/>
</dbReference>
<dbReference type="GO" id="GO:0006412">
    <property type="term" value="P:translation"/>
    <property type="evidence" value="ECO:0007669"/>
    <property type="project" value="UniProtKB-UniRule"/>
</dbReference>
<dbReference type="FunFam" id="3.30.1440.10:FF:000001">
    <property type="entry name" value="50S ribosomal protein L5"/>
    <property type="match status" value="1"/>
</dbReference>
<dbReference type="Gene3D" id="3.30.1440.10">
    <property type="match status" value="1"/>
</dbReference>
<dbReference type="HAMAP" id="MF_01333_B">
    <property type="entry name" value="Ribosomal_uL5_B"/>
    <property type="match status" value="1"/>
</dbReference>
<dbReference type="InterPro" id="IPR002132">
    <property type="entry name" value="Ribosomal_uL5"/>
</dbReference>
<dbReference type="InterPro" id="IPR020930">
    <property type="entry name" value="Ribosomal_uL5_bac-type"/>
</dbReference>
<dbReference type="InterPro" id="IPR031309">
    <property type="entry name" value="Ribosomal_uL5_C"/>
</dbReference>
<dbReference type="InterPro" id="IPR022803">
    <property type="entry name" value="Ribosomal_uL5_dom_sf"/>
</dbReference>
<dbReference type="InterPro" id="IPR031310">
    <property type="entry name" value="Ribosomal_uL5_N"/>
</dbReference>
<dbReference type="NCBIfam" id="NF000585">
    <property type="entry name" value="PRK00010.1"/>
    <property type="match status" value="1"/>
</dbReference>
<dbReference type="PANTHER" id="PTHR11994">
    <property type="entry name" value="60S RIBOSOMAL PROTEIN L11-RELATED"/>
    <property type="match status" value="1"/>
</dbReference>
<dbReference type="Pfam" id="PF00281">
    <property type="entry name" value="Ribosomal_L5"/>
    <property type="match status" value="1"/>
</dbReference>
<dbReference type="Pfam" id="PF00673">
    <property type="entry name" value="Ribosomal_L5_C"/>
    <property type="match status" value="1"/>
</dbReference>
<dbReference type="PIRSF" id="PIRSF002161">
    <property type="entry name" value="Ribosomal_L5"/>
    <property type="match status" value="1"/>
</dbReference>
<dbReference type="SUPFAM" id="SSF55282">
    <property type="entry name" value="RL5-like"/>
    <property type="match status" value="1"/>
</dbReference>
<accession>A4FPL3</accession>
<organism>
    <name type="scientific">Saccharopolyspora erythraea (strain ATCC 11635 / DSM 40517 / JCM 4748 / NBRC 13426 / NCIMB 8594 / NRRL 2338)</name>
    <dbReference type="NCBI Taxonomy" id="405948"/>
    <lineage>
        <taxon>Bacteria</taxon>
        <taxon>Bacillati</taxon>
        <taxon>Actinomycetota</taxon>
        <taxon>Actinomycetes</taxon>
        <taxon>Pseudonocardiales</taxon>
        <taxon>Pseudonocardiaceae</taxon>
        <taxon>Saccharopolyspora</taxon>
    </lineage>
</organism>
<protein>
    <recommendedName>
        <fullName evidence="1">Large ribosomal subunit protein uL5</fullName>
    </recommendedName>
    <alternativeName>
        <fullName evidence="2">50S ribosomal protein L5</fullName>
    </alternativeName>
</protein>
<gene>
    <name evidence="1" type="primary">rplE</name>
    <name type="ordered locus">SACE_6824</name>
</gene>
<reference key="1">
    <citation type="journal article" date="2007" name="Nat. Biotechnol.">
        <title>Complete genome sequence of the erythromycin-producing bacterium Saccharopolyspora erythraea NRRL23338.</title>
        <authorList>
            <person name="Oliynyk M."/>
            <person name="Samborskyy M."/>
            <person name="Lester J.B."/>
            <person name="Mironenko T."/>
            <person name="Scott N."/>
            <person name="Dickens S."/>
            <person name="Haydock S.F."/>
            <person name="Leadlay P.F."/>
        </authorList>
    </citation>
    <scope>NUCLEOTIDE SEQUENCE [LARGE SCALE GENOMIC DNA]</scope>
    <source>
        <strain>ATCC 11635 / DSM 40517 / JCM 4748 / NBRC 13426 / NCIMB 8594 / NRRL 2338</strain>
    </source>
</reference>